<protein>
    <recommendedName>
        <fullName evidence="1">Coenzyme PQQ synthesis protein A</fullName>
    </recommendedName>
    <alternativeName>
        <fullName evidence="1">Pyrroloquinoline quinone biosynthesis protein A</fullName>
    </alternativeName>
</protein>
<name>PQQA_VARPS</name>
<accession>C5CPT7</accession>
<dbReference type="EMBL" id="CP001635">
    <property type="protein sequence ID" value="ACS19676.1"/>
    <property type="molecule type" value="Genomic_DNA"/>
</dbReference>
<dbReference type="STRING" id="543728.Vapar_3057"/>
<dbReference type="KEGG" id="vap:Vapar_3057"/>
<dbReference type="HOGENOM" id="CLU_219131_0_0_4"/>
<dbReference type="UniPathway" id="UPA00539"/>
<dbReference type="GO" id="GO:0018189">
    <property type="term" value="P:pyrroloquinoline quinone biosynthetic process"/>
    <property type="evidence" value="ECO:0007669"/>
    <property type="project" value="UniProtKB-UniRule"/>
</dbReference>
<dbReference type="HAMAP" id="MF_00656">
    <property type="entry name" value="PQQ_syn_PqqA"/>
    <property type="match status" value="1"/>
</dbReference>
<dbReference type="InterPro" id="IPR011725">
    <property type="entry name" value="PQQ_synth_PqqA"/>
</dbReference>
<dbReference type="NCBIfam" id="TIGR02107">
    <property type="entry name" value="PQQ_syn_pqqA"/>
    <property type="match status" value="1"/>
</dbReference>
<dbReference type="Pfam" id="PF08042">
    <property type="entry name" value="PqqA"/>
    <property type="match status" value="1"/>
</dbReference>
<feature type="chain" id="PRO_1000212441" description="Coenzyme PQQ synthesis protein A">
    <location>
        <begin position="1"/>
        <end position="24"/>
    </location>
</feature>
<feature type="cross-link" description="Pyrroloquinoline quinone (Glu-Tyr)" evidence="1">
    <location>
        <begin position="16"/>
        <end position="20"/>
    </location>
</feature>
<organism>
    <name type="scientific">Variovorax paradoxus (strain S110)</name>
    <dbReference type="NCBI Taxonomy" id="543728"/>
    <lineage>
        <taxon>Bacteria</taxon>
        <taxon>Pseudomonadati</taxon>
        <taxon>Pseudomonadota</taxon>
        <taxon>Betaproteobacteria</taxon>
        <taxon>Burkholderiales</taxon>
        <taxon>Comamonadaceae</taxon>
        <taxon>Variovorax</taxon>
    </lineage>
</organism>
<proteinExistence type="inferred from homology"/>
<keyword id="KW-0884">PQQ biosynthesis</keyword>
<gene>
    <name evidence="1" type="primary">pqqA</name>
    <name type="ordered locus">Vapar_3057</name>
</gene>
<evidence type="ECO:0000255" key="1">
    <source>
        <dbReference type="HAMAP-Rule" id="MF_00656"/>
    </source>
</evidence>
<reference key="1">
    <citation type="journal article" date="2011" name="J. Bacteriol.">
        <title>Complete genome sequence of the metabolically versatile plant growth-promoting endophyte, Variovorax paradoxus S110.</title>
        <authorList>
            <person name="Han J.I."/>
            <person name="Choi H.K."/>
            <person name="Lee S.W."/>
            <person name="Orwin P.M."/>
            <person name="Kim J."/>
            <person name="Laroe S.L."/>
            <person name="Kim T.G."/>
            <person name="O'Neil J."/>
            <person name="Leadbetter J.R."/>
            <person name="Lee S.Y."/>
            <person name="Hur C.G."/>
            <person name="Spain J.C."/>
            <person name="Ovchinnikova G."/>
            <person name="Goodwin L."/>
            <person name="Han C."/>
        </authorList>
    </citation>
    <scope>NUCLEOTIDE SEQUENCE [LARGE SCALE GENOMIC DNA]</scope>
    <source>
        <strain>S110</strain>
    </source>
</reference>
<comment type="function">
    <text evidence="1">Required for coenzyme pyrroloquinoline quinone (PQQ) biosynthesis. PQQ is probably formed by cross-linking a specific glutamate to a specific tyrosine residue and excising these residues from the peptide.</text>
</comment>
<comment type="pathway">
    <text evidence="1">Cofactor biosynthesis; pyrroloquinoline quinone biosynthesis.</text>
</comment>
<comment type="similarity">
    <text evidence="1">Belongs to the PqqA family.</text>
</comment>
<sequence length="24" mass="2851">MKWETPTATDLRFGFEITMYVSAR</sequence>